<protein>
    <recommendedName>
        <fullName>Halocin-H4</fullName>
    </recommendedName>
</protein>
<gene>
    <name type="primary">halH4</name>
    <name type="ordered locus">HFX_5264</name>
</gene>
<proteinExistence type="evidence at protein level"/>
<keyword id="KW-0044">Antibiotic</keyword>
<keyword id="KW-0929">Antimicrobial</keyword>
<keyword id="KW-0078">Bacteriocin</keyword>
<keyword id="KW-0903">Direct protein sequencing</keyword>
<keyword id="KW-0614">Plasmid</keyword>
<keyword id="KW-0964">Secreted</keyword>
<keyword id="KW-0732">Signal</keyword>
<accession>Q48236</accession>
<accession>I3RA36</accession>
<feature type="signal peptide">
    <location>
        <begin position="1"/>
        <end position="46"/>
    </location>
</feature>
<feature type="chain" id="PRO_0000013169" description="Halocin-H4">
    <location>
        <begin position="47"/>
        <end position="359"/>
    </location>
</feature>
<feature type="region of interest" description="Disordered" evidence="1">
    <location>
        <begin position="40"/>
        <end position="59"/>
    </location>
</feature>
<feature type="region of interest" description="Disordered" evidence="1">
    <location>
        <begin position="340"/>
        <end position="359"/>
    </location>
</feature>
<feature type="sequence conflict" description="In Ref. 1; AAB58316." evidence="2" ref="1">
    <original>E</original>
    <variation>D</variation>
    <location>
        <position position="171"/>
    </location>
</feature>
<sequence length="359" mass="39639">MSKDRDGRRTSRRGTLKKIGGFSLGALSFGAVGRTQAATGSSVTTADIAPPGPNGDPKSVQIDDKYTGAEMYGEGDFRVGLGTDLTMYPPVYRESLGNGSGGWEFDFTVCGSTACRFVDSNGDVKEDDKAKEMWWQEINFNDINQDLYSRNDSDWVGSTPADTQPEFDYTEFALARDGVTLALTALNPAMGSLALGATYFLSDMVNWIASQHEDDSSLKRKWDYDGLSGPLYADSSTYLLARDEMTSNSYESFTIDNIAVAFPEFPVRTKYYVTFTAPDDPSTQSISTLEEEGIYRVPATEVAAARPPGSRRSKSAADEMVYVADPKKFIEVEPVKNPSIPDRIYEEIEQKKKQRSRKQ</sequence>
<name>HAH4_HALMT</name>
<organism>
    <name type="scientific">Haloferax mediterranei (strain ATCC 33500 / DSM 1411 / JCM 8866 / NBRC 14739 / NCIMB 2177 / R-4)</name>
    <name type="common">Halobacterium mediterranei</name>
    <dbReference type="NCBI Taxonomy" id="523841"/>
    <lineage>
        <taxon>Archaea</taxon>
        <taxon>Methanobacteriati</taxon>
        <taxon>Methanobacteriota</taxon>
        <taxon>Stenosarchaea group</taxon>
        <taxon>Halobacteria</taxon>
        <taxon>Halobacteriales</taxon>
        <taxon>Haloferacaceae</taxon>
        <taxon>Haloferax</taxon>
    </lineage>
</organism>
<comment type="function">
    <text>Has antibacterial activity against other haloarchaeons. Interacts with the membrane of the target cells where it causes permeability changes that result in an ionic imbalance leading to cell lysis and death.</text>
</comment>
<comment type="subcellular location">
    <subcellularLocation>
        <location>Secreted</location>
    </subcellularLocation>
</comment>
<dbReference type="EMBL" id="U16389">
    <property type="protein sequence ID" value="AAB58316.1"/>
    <property type="molecule type" value="Genomic_DNA"/>
</dbReference>
<dbReference type="EMBL" id="CP001870">
    <property type="protein sequence ID" value="AFK21096.1"/>
    <property type="molecule type" value="Genomic_DNA"/>
</dbReference>
<dbReference type="RefSeq" id="WP_014732703.1">
    <property type="nucleotide sequence ID" value="NC_017943.1"/>
</dbReference>
<dbReference type="TCDB" id="9.A.44.1.1">
    <property type="family name" value="the archaeocin/halocin h4 (halh4) family"/>
</dbReference>
<dbReference type="GeneID" id="40158387"/>
<dbReference type="KEGG" id="hme:HFX_5264"/>
<dbReference type="HOGENOM" id="CLU_770753_0_0_2"/>
<dbReference type="OrthoDB" id="351082at2157"/>
<dbReference type="Proteomes" id="UP000006469">
    <property type="component" value="Plasmid pHM300"/>
</dbReference>
<dbReference type="GO" id="GO:0005576">
    <property type="term" value="C:extracellular region"/>
    <property type="evidence" value="ECO:0007669"/>
    <property type="project" value="UniProtKB-SubCell"/>
</dbReference>
<dbReference type="GO" id="GO:0042742">
    <property type="term" value="P:defense response to bacterium"/>
    <property type="evidence" value="ECO:0007669"/>
    <property type="project" value="UniProtKB-KW"/>
</dbReference>
<dbReference type="GO" id="GO:0031640">
    <property type="term" value="P:killing of cells of another organism"/>
    <property type="evidence" value="ECO:0007669"/>
    <property type="project" value="UniProtKB-KW"/>
</dbReference>
<evidence type="ECO:0000256" key="1">
    <source>
        <dbReference type="SAM" id="MobiDB-lite"/>
    </source>
</evidence>
<evidence type="ECO:0000305" key="2"/>
<reference key="1">
    <citation type="journal article" date="1997" name="J. Bacteriol.">
        <title>Isolation, sequence, and expression of the gene encoding halocin H4, a bacteriocin from the halophilic archaeon Haloferax mediterranei R4.</title>
        <authorList>
            <person name="Cheung J."/>
            <person name="Danna K.J."/>
            <person name="O'Connor E.M."/>
            <person name="Price L.B."/>
            <person name="Shand R.F."/>
        </authorList>
    </citation>
    <scope>NUCLEOTIDE SEQUENCE [GENOMIC DNA]</scope>
    <scope>PARTIAL PROTEIN SEQUENCE</scope>
    <source>
        <strain>ATCC 33500 / DSM 1411 / JCM 8866 / NBRC 14739 / NCIMB 2177 / R-4</strain>
    </source>
</reference>
<reference key="2">
    <citation type="journal article" date="2012" name="J. Bacteriol.">
        <title>Complete genome sequence of the metabolically versatile halophilic archaeon Haloferax mediterranei, a poly(3-hydroxybutyrate-co-3-hydroxyvalerate) producer.</title>
        <authorList>
            <person name="Han J."/>
            <person name="Zhang F."/>
            <person name="Hou J."/>
            <person name="Liu X."/>
            <person name="Li M."/>
            <person name="Liu H."/>
            <person name="Cai L."/>
            <person name="Zhang B."/>
            <person name="Chen Y."/>
            <person name="Zhou J."/>
            <person name="Hu S."/>
            <person name="Xiang H."/>
        </authorList>
    </citation>
    <scope>NUCLEOTIDE SEQUENCE [LARGE SCALE GENOMIC DNA]</scope>
    <source>
        <strain>ATCC 33500 / DSM 1411 / JCM 8866 / NBRC 14739 / NCIMB 2177 / R-4</strain>
    </source>
</reference>
<reference key="3">
    <citation type="journal article" date="1985" name="FEMS Microbiol. Lett.">
        <title>Production and purification of halocin H4.</title>
        <authorList>
            <person name="Meseguer I."/>
            <person name="Rodriguez-Valera F."/>
        </authorList>
    </citation>
    <scope>CHARACTERIZATION</scope>
</reference>
<reference key="4">
    <citation type="journal article" date="1986" name="J. Gen. Microbiol.">
        <title>Effect of halocin H4 on cells of Halobacterium halobium.</title>
        <authorList>
            <person name="Meseguer I."/>
            <person name="Rodriguez-Valera F."/>
        </authorList>
    </citation>
    <scope>CHARACTERIZATION</scope>
</reference>
<geneLocation type="plasmid">
    <name>pHM300</name>
</geneLocation>